<proteinExistence type="inferred from homology"/>
<gene>
    <name evidence="1" type="primary">rpsC</name>
    <name type="ordered locus">THEYE_A1440</name>
</gene>
<dbReference type="EMBL" id="CP001147">
    <property type="protein sequence ID" value="ACI20468.1"/>
    <property type="molecule type" value="Genomic_DNA"/>
</dbReference>
<dbReference type="RefSeq" id="WP_012545204.1">
    <property type="nucleotide sequence ID" value="NC_011296.1"/>
</dbReference>
<dbReference type="RefSeq" id="YP_002249239.1">
    <property type="nucleotide sequence ID" value="NC_011296.1"/>
</dbReference>
<dbReference type="SMR" id="B5YG41"/>
<dbReference type="FunCoup" id="B5YG41">
    <property type="interactions" value="563"/>
</dbReference>
<dbReference type="STRING" id="289376.THEYE_A1440"/>
<dbReference type="EnsemblBacteria" id="ACI20468">
    <property type="protein sequence ID" value="ACI20468"/>
    <property type="gene ID" value="THEYE_A1440"/>
</dbReference>
<dbReference type="KEGG" id="tye:THEYE_A1440"/>
<dbReference type="PATRIC" id="fig|289376.4.peg.1401"/>
<dbReference type="eggNOG" id="COG0092">
    <property type="taxonomic scope" value="Bacteria"/>
</dbReference>
<dbReference type="HOGENOM" id="CLU_058591_0_2_0"/>
<dbReference type="InParanoid" id="B5YG41"/>
<dbReference type="OrthoDB" id="9806396at2"/>
<dbReference type="Proteomes" id="UP000000718">
    <property type="component" value="Chromosome"/>
</dbReference>
<dbReference type="GO" id="GO:0022627">
    <property type="term" value="C:cytosolic small ribosomal subunit"/>
    <property type="evidence" value="ECO:0000318"/>
    <property type="project" value="GO_Central"/>
</dbReference>
<dbReference type="GO" id="GO:0003729">
    <property type="term" value="F:mRNA binding"/>
    <property type="evidence" value="ECO:0007669"/>
    <property type="project" value="UniProtKB-UniRule"/>
</dbReference>
<dbReference type="GO" id="GO:0019843">
    <property type="term" value="F:rRNA binding"/>
    <property type="evidence" value="ECO:0007669"/>
    <property type="project" value="UniProtKB-UniRule"/>
</dbReference>
<dbReference type="GO" id="GO:0003735">
    <property type="term" value="F:structural constituent of ribosome"/>
    <property type="evidence" value="ECO:0000318"/>
    <property type="project" value="GO_Central"/>
</dbReference>
<dbReference type="GO" id="GO:0006412">
    <property type="term" value="P:translation"/>
    <property type="evidence" value="ECO:0007669"/>
    <property type="project" value="UniProtKB-UniRule"/>
</dbReference>
<dbReference type="CDD" id="cd02412">
    <property type="entry name" value="KH-II_30S_S3"/>
    <property type="match status" value="1"/>
</dbReference>
<dbReference type="FunFam" id="3.30.1140.32:FF:000002">
    <property type="entry name" value="30S ribosomal protein S3"/>
    <property type="match status" value="1"/>
</dbReference>
<dbReference type="FunFam" id="3.30.300.20:FF:000001">
    <property type="entry name" value="30S ribosomal protein S3"/>
    <property type="match status" value="1"/>
</dbReference>
<dbReference type="Gene3D" id="3.30.300.20">
    <property type="match status" value="1"/>
</dbReference>
<dbReference type="Gene3D" id="3.30.1140.32">
    <property type="entry name" value="Ribosomal protein S3, C-terminal domain"/>
    <property type="match status" value="1"/>
</dbReference>
<dbReference type="HAMAP" id="MF_01309_B">
    <property type="entry name" value="Ribosomal_uS3_B"/>
    <property type="match status" value="1"/>
</dbReference>
<dbReference type="InterPro" id="IPR004087">
    <property type="entry name" value="KH_dom"/>
</dbReference>
<dbReference type="InterPro" id="IPR015946">
    <property type="entry name" value="KH_dom-like_a/b"/>
</dbReference>
<dbReference type="InterPro" id="IPR004044">
    <property type="entry name" value="KH_dom_type_2"/>
</dbReference>
<dbReference type="InterPro" id="IPR009019">
    <property type="entry name" value="KH_sf_prok-type"/>
</dbReference>
<dbReference type="InterPro" id="IPR036419">
    <property type="entry name" value="Ribosomal_S3_C_sf"/>
</dbReference>
<dbReference type="InterPro" id="IPR005704">
    <property type="entry name" value="Ribosomal_uS3_bac-typ"/>
</dbReference>
<dbReference type="InterPro" id="IPR001351">
    <property type="entry name" value="Ribosomal_uS3_C"/>
</dbReference>
<dbReference type="InterPro" id="IPR018280">
    <property type="entry name" value="Ribosomal_uS3_CS"/>
</dbReference>
<dbReference type="NCBIfam" id="TIGR01009">
    <property type="entry name" value="rpsC_bact"/>
    <property type="match status" value="1"/>
</dbReference>
<dbReference type="PANTHER" id="PTHR11760">
    <property type="entry name" value="30S/40S RIBOSOMAL PROTEIN S3"/>
    <property type="match status" value="1"/>
</dbReference>
<dbReference type="PANTHER" id="PTHR11760:SF19">
    <property type="entry name" value="SMALL RIBOSOMAL SUBUNIT PROTEIN US3C"/>
    <property type="match status" value="1"/>
</dbReference>
<dbReference type="Pfam" id="PF07650">
    <property type="entry name" value="KH_2"/>
    <property type="match status" value="1"/>
</dbReference>
<dbReference type="Pfam" id="PF00189">
    <property type="entry name" value="Ribosomal_S3_C"/>
    <property type="match status" value="1"/>
</dbReference>
<dbReference type="SMART" id="SM00322">
    <property type="entry name" value="KH"/>
    <property type="match status" value="1"/>
</dbReference>
<dbReference type="SUPFAM" id="SSF54814">
    <property type="entry name" value="Prokaryotic type KH domain (KH-domain type II)"/>
    <property type="match status" value="1"/>
</dbReference>
<dbReference type="SUPFAM" id="SSF54821">
    <property type="entry name" value="Ribosomal protein S3 C-terminal domain"/>
    <property type="match status" value="1"/>
</dbReference>
<dbReference type="PROSITE" id="PS50823">
    <property type="entry name" value="KH_TYPE_2"/>
    <property type="match status" value="1"/>
</dbReference>
<dbReference type="PROSITE" id="PS00548">
    <property type="entry name" value="RIBOSOMAL_S3"/>
    <property type="match status" value="1"/>
</dbReference>
<evidence type="ECO:0000255" key="1">
    <source>
        <dbReference type="HAMAP-Rule" id="MF_01309"/>
    </source>
</evidence>
<evidence type="ECO:0000305" key="2"/>
<feature type="chain" id="PRO_1000141028" description="Small ribosomal subunit protein uS3">
    <location>
        <begin position="1"/>
        <end position="216"/>
    </location>
</feature>
<feature type="domain" description="KH type-2" evidence="1">
    <location>
        <begin position="38"/>
        <end position="106"/>
    </location>
</feature>
<sequence>MGQKTNPIGNRLGIIRTWESRWFAKKGYADQLIEDLKLRKMLKDKLYHAGISKIEIERVGEKVRVLIFAARPGIIIGKKGAEVERLKKEVEEKTGKQANIEIKEVRRPELDAQLVAENVALQIEKRVAYRRAMKRAVASSMRFGAKGIKVSCAGRLAGAEIARTEWYREGRVPLSTFRADIDYGFAEAKTTYGIIGVKVWIFKGEVQPGQYINYNY</sequence>
<protein>
    <recommendedName>
        <fullName evidence="1">Small ribosomal subunit protein uS3</fullName>
    </recommendedName>
    <alternativeName>
        <fullName evidence="2">30S ribosomal protein S3</fullName>
    </alternativeName>
</protein>
<organism>
    <name type="scientific">Thermodesulfovibrio yellowstonii (strain ATCC 51303 / DSM 11347 / YP87)</name>
    <dbReference type="NCBI Taxonomy" id="289376"/>
    <lineage>
        <taxon>Bacteria</taxon>
        <taxon>Pseudomonadati</taxon>
        <taxon>Nitrospirota</taxon>
        <taxon>Thermodesulfovibrionia</taxon>
        <taxon>Thermodesulfovibrionales</taxon>
        <taxon>Thermodesulfovibrionaceae</taxon>
        <taxon>Thermodesulfovibrio</taxon>
    </lineage>
</organism>
<keyword id="KW-1185">Reference proteome</keyword>
<keyword id="KW-0687">Ribonucleoprotein</keyword>
<keyword id="KW-0689">Ribosomal protein</keyword>
<keyword id="KW-0694">RNA-binding</keyword>
<keyword id="KW-0699">rRNA-binding</keyword>
<name>RS3_THEYD</name>
<reference key="1">
    <citation type="submission" date="2008-08" db="EMBL/GenBank/DDBJ databases">
        <title>The complete genome sequence of Thermodesulfovibrio yellowstonii strain ATCC 51303 / DSM 11347 / YP87.</title>
        <authorList>
            <person name="Dodson R.J."/>
            <person name="Durkin A.S."/>
            <person name="Wu M."/>
            <person name="Eisen J."/>
            <person name="Sutton G."/>
        </authorList>
    </citation>
    <scope>NUCLEOTIDE SEQUENCE [LARGE SCALE GENOMIC DNA]</scope>
    <source>
        <strain>ATCC 51303 / DSM 11347 / YP87</strain>
    </source>
</reference>
<comment type="function">
    <text evidence="1">Binds the lower part of the 30S subunit head. Binds mRNA in the 70S ribosome, positioning it for translation.</text>
</comment>
<comment type="subunit">
    <text evidence="1">Part of the 30S ribosomal subunit. Forms a tight complex with proteins S10 and S14.</text>
</comment>
<comment type="similarity">
    <text evidence="1">Belongs to the universal ribosomal protein uS3 family.</text>
</comment>
<accession>B5YG41</accession>